<gene>
    <name type="primary">Neurl2</name>
    <name type="synonym">Ozz</name>
</gene>
<dbReference type="EMBL" id="AK004524">
    <property type="protein sequence ID" value="BAB23346.1"/>
    <property type="molecule type" value="mRNA"/>
</dbReference>
<dbReference type="CCDS" id="CCDS38330.1"/>
<dbReference type="SMR" id="Q9D0S4"/>
<dbReference type="CORUM" id="Q9D0S4"/>
<dbReference type="FunCoup" id="Q9D0S4">
    <property type="interactions" value="9"/>
</dbReference>
<dbReference type="STRING" id="10090.ENSMUSP00000041806"/>
<dbReference type="PaxDb" id="10090-ENSMUSP00000041806"/>
<dbReference type="ProteomicsDB" id="252825"/>
<dbReference type="AGR" id="MGI:3043305"/>
<dbReference type="MGI" id="MGI:3043305">
    <property type="gene designation" value="Neurl2"/>
</dbReference>
<dbReference type="eggNOG" id="KOG4625">
    <property type="taxonomic scope" value="Eukaryota"/>
</dbReference>
<dbReference type="InParanoid" id="Q9D0S4"/>
<dbReference type="PhylomeDB" id="Q9D0S4"/>
<dbReference type="Reactome" id="R-MMU-8951664">
    <property type="pathway name" value="Neddylation"/>
</dbReference>
<dbReference type="UniPathway" id="UPA00143"/>
<dbReference type="ChiTaRS" id="Jag1">
    <property type="organism name" value="mouse"/>
</dbReference>
<dbReference type="PRO" id="PR:Q9D0S4"/>
<dbReference type="Proteomes" id="UP000000589">
    <property type="component" value="Unplaced"/>
</dbReference>
<dbReference type="RNAct" id="Q9D0S4">
    <property type="molecule type" value="protein"/>
</dbReference>
<dbReference type="GO" id="GO:0005927">
    <property type="term" value="C:muscle tendon junction"/>
    <property type="evidence" value="ECO:0000314"/>
    <property type="project" value="MGI"/>
</dbReference>
<dbReference type="GO" id="GO:0030891">
    <property type="term" value="C:VCB complex"/>
    <property type="evidence" value="ECO:0000314"/>
    <property type="project" value="MGI"/>
</dbReference>
<dbReference type="GO" id="GO:0035556">
    <property type="term" value="P:intracellular signal transduction"/>
    <property type="evidence" value="ECO:0007669"/>
    <property type="project" value="InterPro"/>
</dbReference>
<dbReference type="GO" id="GO:0030239">
    <property type="term" value="P:myofibril assembly"/>
    <property type="evidence" value="ECO:0000315"/>
    <property type="project" value="MGI"/>
</dbReference>
<dbReference type="GO" id="GO:0016567">
    <property type="term" value="P:protein ubiquitination"/>
    <property type="evidence" value="ECO:0007669"/>
    <property type="project" value="UniProtKB-UniPathway"/>
</dbReference>
<dbReference type="GO" id="GO:0045214">
    <property type="term" value="P:sarcomere organization"/>
    <property type="evidence" value="ECO:0000315"/>
    <property type="project" value="MGI"/>
</dbReference>
<dbReference type="CDD" id="cd12887">
    <property type="entry name" value="SPRY_NHR_like"/>
    <property type="match status" value="1"/>
</dbReference>
<dbReference type="Gene3D" id="2.60.120.920">
    <property type="match status" value="1"/>
</dbReference>
<dbReference type="Gene3D" id="1.10.750.20">
    <property type="entry name" value="SOCS box"/>
    <property type="match status" value="1"/>
</dbReference>
<dbReference type="InterPro" id="IPR043136">
    <property type="entry name" value="B30.2/SPRY_sf"/>
</dbReference>
<dbReference type="InterPro" id="IPR037962">
    <property type="entry name" value="Neuralized"/>
</dbReference>
<dbReference type="InterPro" id="IPR006573">
    <property type="entry name" value="NHR_dom"/>
</dbReference>
<dbReference type="InterPro" id="IPR001496">
    <property type="entry name" value="SOCS_box"/>
</dbReference>
<dbReference type="InterPro" id="IPR036036">
    <property type="entry name" value="SOCS_box-like_dom_sf"/>
</dbReference>
<dbReference type="PANTHER" id="PTHR12429">
    <property type="entry name" value="NEURALIZED"/>
    <property type="match status" value="1"/>
</dbReference>
<dbReference type="PANTHER" id="PTHR12429:SF8">
    <property type="entry name" value="NEURALIZED-LIKE PROTEIN 2"/>
    <property type="match status" value="1"/>
</dbReference>
<dbReference type="Pfam" id="PF07177">
    <property type="entry name" value="Neuralized"/>
    <property type="match status" value="1"/>
</dbReference>
<dbReference type="Pfam" id="PF07525">
    <property type="entry name" value="SOCS_box"/>
    <property type="match status" value="1"/>
</dbReference>
<dbReference type="SMART" id="SM00588">
    <property type="entry name" value="NEUZ"/>
    <property type="match status" value="1"/>
</dbReference>
<dbReference type="SMART" id="SM00969">
    <property type="entry name" value="SOCS_box"/>
    <property type="match status" value="1"/>
</dbReference>
<dbReference type="SUPFAM" id="SSF158235">
    <property type="entry name" value="SOCS box-like"/>
    <property type="match status" value="1"/>
</dbReference>
<dbReference type="PROSITE" id="PS51065">
    <property type="entry name" value="NHR"/>
    <property type="match status" value="1"/>
</dbReference>
<dbReference type="PROSITE" id="PS50225">
    <property type="entry name" value="SOCS"/>
    <property type="match status" value="1"/>
</dbReference>
<feature type="chain" id="PRO_0000181258" description="Neuralized-like protein 2">
    <location>
        <begin position="1"/>
        <end position="285"/>
    </location>
</feature>
<feature type="domain" description="NHR" evidence="3">
    <location>
        <begin position="23"/>
        <end position="244"/>
    </location>
</feature>
<feature type="domain" description="SOCS box" evidence="2">
    <location>
        <begin position="250"/>
        <end position="285"/>
    </location>
</feature>
<feature type="region of interest" description="Disordered" evidence="4">
    <location>
        <begin position="1"/>
        <end position="28"/>
    </location>
</feature>
<organism>
    <name type="scientific">Mus musculus</name>
    <name type="common">Mouse</name>
    <dbReference type="NCBI Taxonomy" id="10090"/>
    <lineage>
        <taxon>Eukaryota</taxon>
        <taxon>Metazoa</taxon>
        <taxon>Chordata</taxon>
        <taxon>Craniata</taxon>
        <taxon>Vertebrata</taxon>
        <taxon>Euteleostomi</taxon>
        <taxon>Mammalia</taxon>
        <taxon>Eutheria</taxon>
        <taxon>Euarchontoglires</taxon>
        <taxon>Glires</taxon>
        <taxon>Rodentia</taxon>
        <taxon>Myomorpha</taxon>
        <taxon>Muroidea</taxon>
        <taxon>Muridae</taxon>
        <taxon>Murinae</taxon>
        <taxon>Mus</taxon>
        <taxon>Mus</taxon>
    </lineage>
</organism>
<sequence length="285" mass="31537">MADPSEHVGLGGPRSPARPEPPPTRFHQVHGANIRMDPSGTRATRVESFAHGVCFSREPLAPGQVFLVEIEEKELGWCGHLRLGLTALDPASLAAVPEFSLPDLVSLGHSWVFAITRHHNRVPREGQPEAEAAVPSGPQALLVEPYLRIEQFRIPRDRLVGRSRPGLYSHLLDQLYEQNVLPPTARRSRLGVLFCPREDGTADMHIIINGEDMGPSARGLPAAQPLYAVVDVFASTKSVRLVQLEYGLPSLQTLCRLVIHKRVVHRLAIDVLHLPKGLKDFCKYE</sequence>
<accession>Q9D0S4</accession>
<keyword id="KW-0963">Cytoplasm</keyword>
<keyword id="KW-1185">Reference proteome</keyword>
<keyword id="KW-0833">Ubl conjugation pathway</keyword>
<name>NEUL2_MOUSE</name>
<reference key="1">
    <citation type="journal article" date="2005" name="Science">
        <title>The transcriptional landscape of the mammalian genome.</title>
        <authorList>
            <person name="Carninci P."/>
            <person name="Kasukawa T."/>
            <person name="Katayama S."/>
            <person name="Gough J."/>
            <person name="Frith M.C."/>
            <person name="Maeda N."/>
            <person name="Oyama R."/>
            <person name="Ravasi T."/>
            <person name="Lenhard B."/>
            <person name="Wells C."/>
            <person name="Kodzius R."/>
            <person name="Shimokawa K."/>
            <person name="Bajic V.B."/>
            <person name="Brenner S.E."/>
            <person name="Batalov S."/>
            <person name="Forrest A.R."/>
            <person name="Zavolan M."/>
            <person name="Davis M.J."/>
            <person name="Wilming L.G."/>
            <person name="Aidinis V."/>
            <person name="Allen J.E."/>
            <person name="Ambesi-Impiombato A."/>
            <person name="Apweiler R."/>
            <person name="Aturaliya R.N."/>
            <person name="Bailey T.L."/>
            <person name="Bansal M."/>
            <person name="Baxter L."/>
            <person name="Beisel K.W."/>
            <person name="Bersano T."/>
            <person name="Bono H."/>
            <person name="Chalk A.M."/>
            <person name="Chiu K.P."/>
            <person name="Choudhary V."/>
            <person name="Christoffels A."/>
            <person name="Clutterbuck D.R."/>
            <person name="Crowe M.L."/>
            <person name="Dalla E."/>
            <person name="Dalrymple B.P."/>
            <person name="de Bono B."/>
            <person name="Della Gatta G."/>
            <person name="di Bernardo D."/>
            <person name="Down T."/>
            <person name="Engstrom P."/>
            <person name="Fagiolini M."/>
            <person name="Faulkner G."/>
            <person name="Fletcher C.F."/>
            <person name="Fukushima T."/>
            <person name="Furuno M."/>
            <person name="Futaki S."/>
            <person name="Gariboldi M."/>
            <person name="Georgii-Hemming P."/>
            <person name="Gingeras T.R."/>
            <person name="Gojobori T."/>
            <person name="Green R.E."/>
            <person name="Gustincich S."/>
            <person name="Harbers M."/>
            <person name="Hayashi Y."/>
            <person name="Hensch T.K."/>
            <person name="Hirokawa N."/>
            <person name="Hill D."/>
            <person name="Huminiecki L."/>
            <person name="Iacono M."/>
            <person name="Ikeo K."/>
            <person name="Iwama A."/>
            <person name="Ishikawa T."/>
            <person name="Jakt M."/>
            <person name="Kanapin A."/>
            <person name="Katoh M."/>
            <person name="Kawasawa Y."/>
            <person name="Kelso J."/>
            <person name="Kitamura H."/>
            <person name="Kitano H."/>
            <person name="Kollias G."/>
            <person name="Krishnan S.P."/>
            <person name="Kruger A."/>
            <person name="Kummerfeld S.K."/>
            <person name="Kurochkin I.V."/>
            <person name="Lareau L.F."/>
            <person name="Lazarevic D."/>
            <person name="Lipovich L."/>
            <person name="Liu J."/>
            <person name="Liuni S."/>
            <person name="McWilliam S."/>
            <person name="Madan Babu M."/>
            <person name="Madera M."/>
            <person name="Marchionni L."/>
            <person name="Matsuda H."/>
            <person name="Matsuzawa S."/>
            <person name="Miki H."/>
            <person name="Mignone F."/>
            <person name="Miyake S."/>
            <person name="Morris K."/>
            <person name="Mottagui-Tabar S."/>
            <person name="Mulder N."/>
            <person name="Nakano N."/>
            <person name="Nakauchi H."/>
            <person name="Ng P."/>
            <person name="Nilsson R."/>
            <person name="Nishiguchi S."/>
            <person name="Nishikawa S."/>
            <person name="Nori F."/>
            <person name="Ohara O."/>
            <person name="Okazaki Y."/>
            <person name="Orlando V."/>
            <person name="Pang K.C."/>
            <person name="Pavan W.J."/>
            <person name="Pavesi G."/>
            <person name="Pesole G."/>
            <person name="Petrovsky N."/>
            <person name="Piazza S."/>
            <person name="Reed J."/>
            <person name="Reid J.F."/>
            <person name="Ring B.Z."/>
            <person name="Ringwald M."/>
            <person name="Rost B."/>
            <person name="Ruan Y."/>
            <person name="Salzberg S.L."/>
            <person name="Sandelin A."/>
            <person name="Schneider C."/>
            <person name="Schoenbach C."/>
            <person name="Sekiguchi K."/>
            <person name="Semple C.A."/>
            <person name="Seno S."/>
            <person name="Sessa L."/>
            <person name="Sheng Y."/>
            <person name="Shibata Y."/>
            <person name="Shimada H."/>
            <person name="Shimada K."/>
            <person name="Silva D."/>
            <person name="Sinclair B."/>
            <person name="Sperling S."/>
            <person name="Stupka E."/>
            <person name="Sugiura K."/>
            <person name="Sultana R."/>
            <person name="Takenaka Y."/>
            <person name="Taki K."/>
            <person name="Tammoja K."/>
            <person name="Tan S.L."/>
            <person name="Tang S."/>
            <person name="Taylor M.S."/>
            <person name="Tegner J."/>
            <person name="Teichmann S.A."/>
            <person name="Ueda H.R."/>
            <person name="van Nimwegen E."/>
            <person name="Verardo R."/>
            <person name="Wei C.L."/>
            <person name="Yagi K."/>
            <person name="Yamanishi H."/>
            <person name="Zabarovsky E."/>
            <person name="Zhu S."/>
            <person name="Zimmer A."/>
            <person name="Hide W."/>
            <person name="Bult C."/>
            <person name="Grimmond S.M."/>
            <person name="Teasdale R.D."/>
            <person name="Liu E.T."/>
            <person name="Brusic V."/>
            <person name="Quackenbush J."/>
            <person name="Wahlestedt C."/>
            <person name="Mattick J.S."/>
            <person name="Hume D.A."/>
            <person name="Kai C."/>
            <person name="Sasaki D."/>
            <person name="Tomaru Y."/>
            <person name="Fukuda S."/>
            <person name="Kanamori-Katayama M."/>
            <person name="Suzuki M."/>
            <person name="Aoki J."/>
            <person name="Arakawa T."/>
            <person name="Iida J."/>
            <person name="Imamura K."/>
            <person name="Itoh M."/>
            <person name="Kato T."/>
            <person name="Kawaji H."/>
            <person name="Kawagashira N."/>
            <person name="Kawashima T."/>
            <person name="Kojima M."/>
            <person name="Kondo S."/>
            <person name="Konno H."/>
            <person name="Nakano K."/>
            <person name="Ninomiya N."/>
            <person name="Nishio T."/>
            <person name="Okada M."/>
            <person name="Plessy C."/>
            <person name="Shibata K."/>
            <person name="Shiraki T."/>
            <person name="Suzuki S."/>
            <person name="Tagami M."/>
            <person name="Waki K."/>
            <person name="Watahiki A."/>
            <person name="Okamura-Oho Y."/>
            <person name="Suzuki H."/>
            <person name="Kawai J."/>
            <person name="Hayashizaki Y."/>
        </authorList>
    </citation>
    <scope>NUCLEOTIDE SEQUENCE [LARGE SCALE MRNA]</scope>
    <source>
        <strain>C57BL/6J</strain>
        <tissue>Embryo</tissue>
    </source>
</reference>
<reference key="2">
    <citation type="journal article" date="2004" name="Dev. Cell">
        <title>Ozz-E3, a muscle-specific ubiquitin ligase, regulates beta-catenin degradation during myogenesis.</title>
        <authorList>
            <person name="Nastasi T."/>
            <person name="Bongiovanni A."/>
            <person name="Campos Y."/>
            <person name="Mann L."/>
            <person name="Toy J.N."/>
            <person name="Bostrom J."/>
            <person name="Rottier R."/>
            <person name="Hahn C."/>
            <person name="Conaway J.W."/>
            <person name="Harris A.J."/>
            <person name="D'Azzo A."/>
        </authorList>
    </citation>
    <scope>FUNCTION</scope>
    <scope>TISSUE SPECIFICITY</scope>
    <scope>SUBCELLULAR LOCATION</scope>
    <scope>INTERACTION WITH CTNNB1</scope>
    <scope>RECONSTITUTION OF AN E3 UBIQUITIN-PROTEIN LIGASE COMPLEX</scope>
</reference>
<proteinExistence type="evidence at protein level"/>
<evidence type="ECO:0000250" key="1"/>
<evidence type="ECO:0000255" key="2">
    <source>
        <dbReference type="PROSITE-ProRule" id="PRU00194"/>
    </source>
</evidence>
<evidence type="ECO:0000255" key="3">
    <source>
        <dbReference type="PROSITE-ProRule" id="PRU00400"/>
    </source>
</evidence>
<evidence type="ECO:0000256" key="4">
    <source>
        <dbReference type="SAM" id="MobiDB-lite"/>
    </source>
</evidence>
<evidence type="ECO:0000269" key="5">
    <source>
    </source>
</evidence>
<protein>
    <recommendedName>
        <fullName>Neuralized-like protein 2</fullName>
    </recommendedName>
</protein>
<comment type="function">
    <text evidence="5">Plays an important role in the process of myofiber differentiation and maturation. Probable substrate-recognition component of a SCF-like ECS (Elongin BC-CUL2/5-SOCS-box protein) E3 ubiquitin-protein ligase complex, which mediates the ubiquitination of proteins. Probably contributes to catalysis through recognition and positioning of the substrate and the ubiquitin-conjugating enzyme. During myogenesis, controls the ubiquitination and degradation of the specific pool of CTNNB1/beta-catenin located at the sarcolemma.</text>
</comment>
<comment type="pathway">
    <text>Protein modification; protein ubiquitination.</text>
</comment>
<comment type="subunit">
    <text evidence="5">Probable component the ECS(NEURL2) E3 ubiquitin-protein ligase complex consisting of ELOB/Elongin B, ELOC/Elongin C, CUL5, RBX1 and NEURL2. Interacts with CTNNB1.</text>
</comment>
<comment type="subcellular location">
    <subcellularLocation>
        <location evidence="5">Cytoplasm</location>
    </subcellularLocation>
    <text>In primary myoblasts, localized predominantly at the tips of differentiating myofibers.</text>
</comment>
<comment type="tissue specificity">
    <text evidence="5">Expressed specifically in skeletal and cardiac muscles.</text>
</comment>
<comment type="developmental stage">
    <text>At 10 dpc, confined to the developing heart and the somites at the tips of the myotomal cells near the intermyotomal septum. At 14 to 15 dpc, accumulates near the myotendinous junctions, the site of sarcomere assembly in growing myotubes. Present in negligible amounts in proliferating myoblasts, induced during differentiation.</text>
</comment>
<comment type="domain">
    <text evidence="1">The SOCS domain mediates the interaction with ELOB and ELOC, while the NHR domain may be involved in ubiquitination substrate binding.</text>
</comment>